<feature type="initiator methionine" description="Removed" evidence="3">
    <location>
        <position position="1"/>
    </location>
</feature>
<feature type="chain" id="PRO_0000147105" description="Large ribosomal subunit protein uL16">
    <location>
        <begin position="2"/>
        <end position="214"/>
    </location>
</feature>
<feature type="modified residue" description="Citrulline" evidence="1">
    <location>
        <position position="32"/>
    </location>
</feature>
<feature type="cross-link" description="Glycyl lysine isopeptide (Lys-Gly) (interchain with G-Cter in SUMO2)" evidence="23">
    <location>
        <position position="175"/>
    </location>
</feature>
<feature type="cross-link" description="Glycyl lysine isopeptide (Lys-Gly) (interchain with G-Cter in ubiquitin)">
    <location>
        <position position="188"/>
    </location>
</feature>
<feature type="sequence variant" id="VAR_079288" description="In MRXS35; increased the formation of actively translating ribosomes when expressed in a yeast heterologous system." evidence="13">
    <original>A</original>
    <variation>V</variation>
    <location>
        <position position="64"/>
    </location>
</feature>
<feature type="sequence variant" id="VAR_079289" description="In MRXS35; loss of function; fails to rescue embryonic brain development when expressed in a zebrafish heterologous system; dbSNP:rs1131692040." evidence="11">
    <original>K</original>
    <variation>E</variation>
    <location>
        <position position="78"/>
    </location>
</feature>
<feature type="sequence variant" id="VAR_079290" description="In MRXS35; uncertain significance; dbSNP:rs1131692041." evidence="12">
    <original>G</original>
    <variation>S</variation>
    <location>
        <position position="161"/>
    </location>
</feature>
<feature type="sequence variant" id="VAR_006922" description="Rescues embryonic brain development when expressed in a zebrafish heterologous system; dbSNP:rs4909." evidence="2 4 5 6 7 8 11 14 15 16 17 18">
    <original>S</original>
    <variation>N</variation>
    <location>
        <position position="202"/>
    </location>
</feature>
<feature type="sequence variant" id="VAR_027795" description="Risk factor for AUTSX5; no effect on function; rescues embryonic brain development when expressed in a zebrafish heterologous system; dbSNP:rs387906727." evidence="9 11">
    <original>L</original>
    <variation>M</variation>
    <location>
        <position position="206"/>
    </location>
</feature>
<feature type="sequence variant" id="VAR_027796" description="Risk factor for AUTSX5; no effect on function; rescues embryonic brain development when expressed in a zebrafish heterologous system; dbSNP:rs782521991." evidence="9 10 11">
    <original>H</original>
    <variation>Q</variation>
    <location>
        <position position="213"/>
    </location>
</feature>
<feature type="sequence conflict" description="In Ref. 5; AAL88713." evidence="20" ref="5">
    <location>
        <position position="23"/>
    </location>
</feature>
<feature type="sequence conflict" description="In Ref. 8; BAD97029." evidence="20" ref="8">
    <original>F</original>
    <variation>L</variation>
    <location>
        <position position="157"/>
    </location>
</feature>
<feature type="turn" evidence="24">
    <location>
        <begin position="43"/>
        <end position="45"/>
    </location>
</feature>
<feature type="strand" evidence="24">
    <location>
        <begin position="48"/>
        <end position="54"/>
    </location>
</feature>
<feature type="strand" evidence="24">
    <location>
        <begin position="58"/>
        <end position="61"/>
    </location>
</feature>
<feature type="helix" evidence="24">
    <location>
        <begin position="62"/>
        <end position="80"/>
    </location>
</feature>
<feature type="strand" evidence="24">
    <location>
        <begin position="84"/>
        <end position="89"/>
    </location>
</feature>
<feature type="strand" evidence="24">
    <location>
        <begin position="126"/>
        <end position="129"/>
    </location>
</feature>
<feature type="strand" evidence="24">
    <location>
        <begin position="133"/>
        <end position="140"/>
    </location>
</feature>
<feature type="helix" evidence="24">
    <location>
        <begin position="142"/>
        <end position="144"/>
    </location>
</feature>
<feature type="helix" evidence="24">
    <location>
        <begin position="145"/>
        <end position="155"/>
    </location>
</feature>
<feature type="helix" evidence="24">
    <location>
        <begin position="156"/>
        <end position="158"/>
    </location>
</feature>
<feature type="strand" evidence="24">
    <location>
        <begin position="159"/>
        <end position="161"/>
    </location>
</feature>
<feature type="strand" evidence="24">
    <location>
        <begin position="163"/>
        <end position="169"/>
    </location>
</feature>
<name>RL10_HUMAN</name>
<reference key="1">
    <citation type="journal article" date="1991" name="Nucleic Acids Res.">
        <title>The isolation and characterization of a novel cDNA demonstrating an altered mRNA level in nontumorigenic Wilms' microcell hybrid cells.</title>
        <authorList>
            <person name="Dowdy S.F."/>
            <person name="Lai K.M."/>
            <person name="Weissman B.E."/>
            <person name="Matsui Y."/>
            <person name="Hogan B.L.M."/>
            <person name="Stanbridge E.S."/>
        </authorList>
    </citation>
    <scope>NUCLEOTIDE SEQUENCE [MRNA]</scope>
</reference>
<reference key="2">
    <citation type="journal article" date="1992" name="Hum. Mol. Genet.">
        <title>Identification and characterization of a new gene in the human Xq28 region.</title>
        <authorList>
            <person name="van den Ouweland A.M.W."/>
            <person name="Kioschis P."/>
            <person name="Verdijk M."/>
            <person name="Tamanini F."/>
            <person name="Toniolo D."/>
            <person name="Poustka A."/>
            <person name="van Oost B.A."/>
        </authorList>
    </citation>
    <scope>NUCLEOTIDE SEQUENCE [GENOMIC DNA]</scope>
</reference>
<reference key="3">
    <citation type="submission" date="1991-08" db="EMBL/GenBank/DDBJ databases">
        <title>Sequence analysis of a novel gene expressed in normal and in tumor-derived tissue.</title>
        <authorList>
            <person name="Kroepelin M."/>
        </authorList>
    </citation>
    <scope>NUCLEOTIDE SEQUENCE [MRNA]</scope>
    <source>
        <tissue>Mammary gland</tissue>
    </source>
</reference>
<reference key="4">
    <citation type="journal article" date="1992" name="Hum. Mol. Genet.">
        <title>Genomic organization of a cDNA (QM) demonstrating an altered mRNA level in nontumorigenic Wilms' microcell hybrid cells and its localization to Xq28.</title>
        <authorList>
            <person name="Kaneko K."/>
            <person name="Kobayashi H."/>
            <person name="Onodera O."/>
            <person name="Miyatake T."/>
            <person name="Tsuji S."/>
        </authorList>
    </citation>
    <scope>NUCLEOTIDE SEQUENCE [GENOMIC DNA]</scope>
</reference>
<reference key="5">
    <citation type="journal article" date="2002" name="J. Biol. Chem.">
        <title>QM, a putative tumor suppressor, regulates proto-oncogene c-Yes.</title>
        <authorList>
            <person name="Oh H.S."/>
            <person name="Kwon H."/>
            <person name="Sun S.K."/>
            <person name="Yang C.-H."/>
        </authorList>
    </citation>
    <scope>NUCLEOTIDE SEQUENCE [MRNA]</scope>
    <scope>VARIANT ASN-202</scope>
</reference>
<reference key="6">
    <citation type="journal article" date="2006" name="Cancer Biol. Ther.">
        <title>Loss of heterozygosity and microsatellite instability at the Xq28 and the A/G heterozygosity of the QM gene are associated with ovarian cancer.</title>
        <authorList>
            <person name="Shen X.J."/>
            <person name="Ali-Fehmi R."/>
            <person name="Weng C.R."/>
            <person name="Sarkar F.H."/>
            <person name="Grignon D."/>
            <person name="Liao D.J."/>
        </authorList>
    </citation>
    <scope>NUCLEOTIDE SEQUENCE [MRNA]</scope>
    <scope>VARIANT ASN-202</scope>
    <source>
        <tissue>Mammary cancer</tissue>
        <tissue>Ovarian carcinoma</tissue>
        <tissue>Pancreatic cancer</tissue>
        <tissue>Prostatic carcinoma</tissue>
    </source>
</reference>
<reference key="7">
    <citation type="submission" date="2004-06" db="EMBL/GenBank/DDBJ databases">
        <title>Cloning of human full open reading frames in Gateway(TM) system entry vector (pDONR201).</title>
        <authorList>
            <person name="Halleck A."/>
            <person name="Ebert L."/>
            <person name="Mkoundinya M."/>
            <person name="Schick M."/>
            <person name="Eisenstein S."/>
            <person name="Neubert P."/>
            <person name="Kstrang K."/>
            <person name="Schatten R."/>
            <person name="Shen B."/>
            <person name="Henze S."/>
            <person name="Mar W."/>
            <person name="Korn B."/>
            <person name="Zuo D."/>
            <person name="Hu Y."/>
            <person name="LaBaer J."/>
        </authorList>
    </citation>
    <scope>NUCLEOTIDE SEQUENCE [LARGE SCALE MRNA]</scope>
</reference>
<reference key="8">
    <citation type="submission" date="2005-04" db="EMBL/GenBank/DDBJ databases">
        <authorList>
            <person name="Suzuki Y."/>
            <person name="Sugano S."/>
            <person name="Totoki Y."/>
            <person name="Toyoda A."/>
            <person name="Takeda T."/>
            <person name="Sakaki Y."/>
            <person name="Tanaka A."/>
            <person name="Yokoyama S."/>
        </authorList>
    </citation>
    <scope>NUCLEOTIDE SEQUENCE [LARGE SCALE MRNA]</scope>
    <source>
        <tissue>Thymus</tissue>
    </source>
</reference>
<reference key="9">
    <citation type="journal article" date="1996" name="Hum. Mol. Genet.">
        <title>Long-range sequence analysis in Xq28: thirteen known and six candidate genes in 219.4 kb of high GC DNA between the RCP/GCP and G6PD loci.</title>
        <authorList>
            <person name="Chen E.Y."/>
            <person name="Zollo M."/>
            <person name="Mazzarella R.A."/>
            <person name="Ciccodicola A."/>
            <person name="Chen C.-N."/>
            <person name="Zuo L."/>
            <person name="Heiner C."/>
            <person name="Burough F.W."/>
            <person name="Ripetto M."/>
            <person name="Schlessinger D."/>
            <person name="D'Urso M."/>
        </authorList>
    </citation>
    <scope>NUCLEOTIDE SEQUENCE [LARGE SCALE GENOMIC DNA]</scope>
</reference>
<reference key="10">
    <citation type="submission" date="2005-09" db="EMBL/GenBank/DDBJ databases">
        <authorList>
            <person name="Mural R.J."/>
            <person name="Istrail S."/>
            <person name="Sutton G.G."/>
            <person name="Florea L."/>
            <person name="Halpern A.L."/>
            <person name="Mobarry C.M."/>
            <person name="Lippert R."/>
            <person name="Walenz B."/>
            <person name="Shatkay H."/>
            <person name="Dew I."/>
            <person name="Miller J.R."/>
            <person name="Flanigan M.J."/>
            <person name="Edwards N.J."/>
            <person name="Bolanos R."/>
            <person name="Fasulo D."/>
            <person name="Halldorsson B.V."/>
            <person name="Hannenhalli S."/>
            <person name="Turner R."/>
            <person name="Yooseph S."/>
            <person name="Lu F."/>
            <person name="Nusskern D.R."/>
            <person name="Shue B.C."/>
            <person name="Zheng X.H."/>
            <person name="Zhong F."/>
            <person name="Delcher A.L."/>
            <person name="Huson D.H."/>
            <person name="Kravitz S.A."/>
            <person name="Mouchard L."/>
            <person name="Reinert K."/>
            <person name="Remington K.A."/>
            <person name="Clark A.G."/>
            <person name="Waterman M.S."/>
            <person name="Eichler E.E."/>
            <person name="Adams M.D."/>
            <person name="Hunkapiller M.W."/>
            <person name="Myers E.W."/>
            <person name="Venter J.C."/>
        </authorList>
    </citation>
    <scope>NUCLEOTIDE SEQUENCE [LARGE SCALE GENOMIC DNA]</scope>
</reference>
<reference key="11">
    <citation type="journal article" date="2005" name="Nature">
        <title>The DNA sequence of the human X chromosome.</title>
        <authorList>
            <person name="Ross M.T."/>
            <person name="Grafham D.V."/>
            <person name="Coffey A.J."/>
            <person name="Scherer S."/>
            <person name="McLay K."/>
            <person name="Muzny D."/>
            <person name="Platzer M."/>
            <person name="Howell G.R."/>
            <person name="Burrows C."/>
            <person name="Bird C.P."/>
            <person name="Frankish A."/>
            <person name="Lovell F.L."/>
            <person name="Howe K.L."/>
            <person name="Ashurst J.L."/>
            <person name="Fulton R.S."/>
            <person name="Sudbrak R."/>
            <person name="Wen G."/>
            <person name="Jones M.C."/>
            <person name="Hurles M.E."/>
            <person name="Andrews T.D."/>
            <person name="Scott C.E."/>
            <person name="Searle S."/>
            <person name="Ramser J."/>
            <person name="Whittaker A."/>
            <person name="Deadman R."/>
            <person name="Carter N.P."/>
            <person name="Hunt S.E."/>
            <person name="Chen R."/>
            <person name="Cree A."/>
            <person name="Gunaratne P."/>
            <person name="Havlak P."/>
            <person name="Hodgson A."/>
            <person name="Metzker M.L."/>
            <person name="Richards S."/>
            <person name="Scott G."/>
            <person name="Steffen D."/>
            <person name="Sodergren E."/>
            <person name="Wheeler D.A."/>
            <person name="Worley K.C."/>
            <person name="Ainscough R."/>
            <person name="Ambrose K.D."/>
            <person name="Ansari-Lari M.A."/>
            <person name="Aradhya S."/>
            <person name="Ashwell R.I."/>
            <person name="Babbage A.K."/>
            <person name="Bagguley C.L."/>
            <person name="Ballabio A."/>
            <person name="Banerjee R."/>
            <person name="Barker G.E."/>
            <person name="Barlow K.F."/>
            <person name="Barrett I.P."/>
            <person name="Bates K.N."/>
            <person name="Beare D.M."/>
            <person name="Beasley H."/>
            <person name="Beasley O."/>
            <person name="Beck A."/>
            <person name="Bethel G."/>
            <person name="Blechschmidt K."/>
            <person name="Brady N."/>
            <person name="Bray-Allen S."/>
            <person name="Bridgeman A.M."/>
            <person name="Brown A.J."/>
            <person name="Brown M.J."/>
            <person name="Bonnin D."/>
            <person name="Bruford E.A."/>
            <person name="Buhay C."/>
            <person name="Burch P."/>
            <person name="Burford D."/>
            <person name="Burgess J."/>
            <person name="Burrill W."/>
            <person name="Burton J."/>
            <person name="Bye J.M."/>
            <person name="Carder C."/>
            <person name="Carrel L."/>
            <person name="Chako J."/>
            <person name="Chapman J.C."/>
            <person name="Chavez D."/>
            <person name="Chen E."/>
            <person name="Chen G."/>
            <person name="Chen Y."/>
            <person name="Chen Z."/>
            <person name="Chinault C."/>
            <person name="Ciccodicola A."/>
            <person name="Clark S.Y."/>
            <person name="Clarke G."/>
            <person name="Clee C.M."/>
            <person name="Clegg S."/>
            <person name="Clerc-Blankenburg K."/>
            <person name="Clifford K."/>
            <person name="Cobley V."/>
            <person name="Cole C.G."/>
            <person name="Conquer J.S."/>
            <person name="Corby N."/>
            <person name="Connor R.E."/>
            <person name="David R."/>
            <person name="Davies J."/>
            <person name="Davis C."/>
            <person name="Davis J."/>
            <person name="Delgado O."/>
            <person name="Deshazo D."/>
            <person name="Dhami P."/>
            <person name="Ding Y."/>
            <person name="Dinh H."/>
            <person name="Dodsworth S."/>
            <person name="Draper H."/>
            <person name="Dugan-Rocha S."/>
            <person name="Dunham A."/>
            <person name="Dunn M."/>
            <person name="Durbin K.J."/>
            <person name="Dutta I."/>
            <person name="Eades T."/>
            <person name="Ellwood M."/>
            <person name="Emery-Cohen A."/>
            <person name="Errington H."/>
            <person name="Evans K.L."/>
            <person name="Faulkner L."/>
            <person name="Francis F."/>
            <person name="Frankland J."/>
            <person name="Fraser A.E."/>
            <person name="Galgoczy P."/>
            <person name="Gilbert J."/>
            <person name="Gill R."/>
            <person name="Gloeckner G."/>
            <person name="Gregory S.G."/>
            <person name="Gribble S."/>
            <person name="Griffiths C."/>
            <person name="Grocock R."/>
            <person name="Gu Y."/>
            <person name="Gwilliam R."/>
            <person name="Hamilton C."/>
            <person name="Hart E.A."/>
            <person name="Hawes A."/>
            <person name="Heath P.D."/>
            <person name="Heitmann K."/>
            <person name="Hennig S."/>
            <person name="Hernandez J."/>
            <person name="Hinzmann B."/>
            <person name="Ho S."/>
            <person name="Hoffs M."/>
            <person name="Howden P.J."/>
            <person name="Huckle E.J."/>
            <person name="Hume J."/>
            <person name="Hunt P.J."/>
            <person name="Hunt A.R."/>
            <person name="Isherwood J."/>
            <person name="Jacob L."/>
            <person name="Johnson D."/>
            <person name="Jones S."/>
            <person name="de Jong P.J."/>
            <person name="Joseph S.S."/>
            <person name="Keenan S."/>
            <person name="Kelly S."/>
            <person name="Kershaw J.K."/>
            <person name="Khan Z."/>
            <person name="Kioschis P."/>
            <person name="Klages S."/>
            <person name="Knights A.J."/>
            <person name="Kosiura A."/>
            <person name="Kovar-Smith C."/>
            <person name="Laird G.K."/>
            <person name="Langford C."/>
            <person name="Lawlor S."/>
            <person name="Leversha M."/>
            <person name="Lewis L."/>
            <person name="Liu W."/>
            <person name="Lloyd C."/>
            <person name="Lloyd D.M."/>
            <person name="Loulseged H."/>
            <person name="Loveland J.E."/>
            <person name="Lovell J.D."/>
            <person name="Lozado R."/>
            <person name="Lu J."/>
            <person name="Lyne R."/>
            <person name="Ma J."/>
            <person name="Maheshwari M."/>
            <person name="Matthews L.H."/>
            <person name="McDowall J."/>
            <person name="McLaren S."/>
            <person name="McMurray A."/>
            <person name="Meidl P."/>
            <person name="Meitinger T."/>
            <person name="Milne S."/>
            <person name="Miner G."/>
            <person name="Mistry S.L."/>
            <person name="Morgan M."/>
            <person name="Morris S."/>
            <person name="Mueller I."/>
            <person name="Mullikin J.C."/>
            <person name="Nguyen N."/>
            <person name="Nordsiek G."/>
            <person name="Nyakatura G."/>
            <person name="O'dell C.N."/>
            <person name="Okwuonu G."/>
            <person name="Palmer S."/>
            <person name="Pandian R."/>
            <person name="Parker D."/>
            <person name="Parrish J."/>
            <person name="Pasternak S."/>
            <person name="Patel D."/>
            <person name="Pearce A.V."/>
            <person name="Pearson D.M."/>
            <person name="Pelan S.E."/>
            <person name="Perez L."/>
            <person name="Porter K.M."/>
            <person name="Ramsey Y."/>
            <person name="Reichwald K."/>
            <person name="Rhodes S."/>
            <person name="Ridler K.A."/>
            <person name="Schlessinger D."/>
            <person name="Schueler M.G."/>
            <person name="Sehra H.K."/>
            <person name="Shaw-Smith C."/>
            <person name="Shen H."/>
            <person name="Sheridan E.M."/>
            <person name="Shownkeen R."/>
            <person name="Skuce C.D."/>
            <person name="Smith M.L."/>
            <person name="Sotheran E.C."/>
            <person name="Steingruber H.E."/>
            <person name="Steward C.A."/>
            <person name="Storey R."/>
            <person name="Swann R.M."/>
            <person name="Swarbreck D."/>
            <person name="Tabor P.E."/>
            <person name="Taudien S."/>
            <person name="Taylor T."/>
            <person name="Teague B."/>
            <person name="Thomas K."/>
            <person name="Thorpe A."/>
            <person name="Timms K."/>
            <person name="Tracey A."/>
            <person name="Trevanion S."/>
            <person name="Tromans A.C."/>
            <person name="d'Urso M."/>
            <person name="Verduzco D."/>
            <person name="Villasana D."/>
            <person name="Waldron L."/>
            <person name="Wall M."/>
            <person name="Wang Q."/>
            <person name="Warren J."/>
            <person name="Warry G.L."/>
            <person name="Wei X."/>
            <person name="West A."/>
            <person name="Whitehead S.L."/>
            <person name="Whiteley M.N."/>
            <person name="Wilkinson J.E."/>
            <person name="Willey D.L."/>
            <person name="Williams G."/>
            <person name="Williams L."/>
            <person name="Williamson A."/>
            <person name="Williamson H."/>
            <person name="Wilming L."/>
            <person name="Woodmansey R.L."/>
            <person name="Wray P.W."/>
            <person name="Yen J."/>
            <person name="Zhang J."/>
            <person name="Zhou J."/>
            <person name="Zoghbi H."/>
            <person name="Zorilla S."/>
            <person name="Buck D."/>
            <person name="Reinhardt R."/>
            <person name="Poustka A."/>
            <person name="Rosenthal A."/>
            <person name="Lehrach H."/>
            <person name="Meindl A."/>
            <person name="Minx P.J."/>
            <person name="Hillier L.W."/>
            <person name="Willard H.F."/>
            <person name="Wilson R.K."/>
            <person name="Waterston R.H."/>
            <person name="Rice C.M."/>
            <person name="Vaudin M."/>
            <person name="Coulson A."/>
            <person name="Nelson D.L."/>
            <person name="Weinstock G."/>
            <person name="Sulston J.E."/>
            <person name="Durbin R.M."/>
            <person name="Hubbard T."/>
            <person name="Gibbs R.A."/>
            <person name="Beck S."/>
            <person name="Rogers J."/>
            <person name="Bentley D.R."/>
        </authorList>
    </citation>
    <scope>NUCLEOTIDE SEQUENCE [LARGE SCALE GENOMIC DNA]</scope>
</reference>
<reference key="12">
    <citation type="journal article" date="2004" name="Genome Res.">
        <title>The status, quality, and expansion of the NIH full-length cDNA project: the Mammalian Gene Collection (MGC).</title>
        <authorList>
            <consortium name="The MGC Project Team"/>
        </authorList>
    </citation>
    <scope>NUCLEOTIDE SEQUENCE [LARGE SCALE MRNA]</scope>
    <scope>VARIANT ASN-202</scope>
    <source>
        <tissue>Brain</tissue>
        <tissue>Mammary gland</tissue>
        <tissue>Placenta</tissue>
    </source>
</reference>
<reference key="13">
    <citation type="journal article" date="1992" name="Biochem. Biophys. Res. Commun.">
        <title>cDNA cloning and genomic analysis of a new multigene family sharing common phylogenetic and expression profiles with the laminin receptor gene.</title>
        <authorList>
            <person name="Bignon C."/>
            <person name="Roux-Dosseto M."/>
            <person name="Zeigler M.E."/>
            <person name="Wicha M.S."/>
            <person name="Martin P.M."/>
        </authorList>
    </citation>
    <scope>NUCLEOTIDE SEQUENCE [MRNA] OF 1-147</scope>
</reference>
<reference key="14">
    <citation type="journal article" date="1998" name="Genome Res.">
        <title>A map of 75 human ribosomal protein genes.</title>
        <authorList>
            <person name="Kenmochi N."/>
            <person name="Kawaguchi T."/>
            <person name="Rozen S."/>
            <person name="Davis E."/>
            <person name="Goodman N."/>
            <person name="Hudson T.J."/>
            <person name="Tanaka T."/>
            <person name="Page D.C."/>
        </authorList>
    </citation>
    <scope>NUCLEOTIDE SEQUENCE [GENOMIC DNA] OF 135-214</scope>
</reference>
<reference key="15">
    <citation type="journal article" date="2003" name="J. Protein Chem.">
        <title>Characterization and analysis of posttranslational modifications of the human large cytoplasmic ribosomal subunit proteins by mass spectrometry and Edman sequencing.</title>
        <authorList>
            <person name="Odintsova T.I."/>
            <person name="Muller E.C."/>
            <person name="Ivanov A.V."/>
            <person name="Egorov T.A."/>
            <person name="Bienert R."/>
            <person name="Vladimirov S.N."/>
            <person name="Kostka S."/>
            <person name="Otto A."/>
            <person name="Wittmann-Liebold B."/>
            <person name="Karpova G.G."/>
        </authorList>
    </citation>
    <scope>PROTEIN SEQUENCE OF 2-11</scope>
    <scope>IDENTIFICATION BY MASS SPECTROMETRY</scope>
    <scope>FUNCTION</scope>
    <scope>SUBUNIT</scope>
</reference>
<reference key="16">
    <citation type="journal article" date="2003" name="Nature">
        <title>Proteomic characterization of the human centrosome by protein correlation profiling.</title>
        <authorList>
            <person name="Andersen J.S."/>
            <person name="Wilkinson C.J."/>
            <person name="Mayor T."/>
            <person name="Mortensen P."/>
            <person name="Nigg E.A."/>
            <person name="Mann M."/>
        </authorList>
    </citation>
    <scope>IDENTIFICATION BY MASS SPECTROMETRY</scope>
    <source>
        <tissue>Lymphoblast</tissue>
    </source>
</reference>
<reference key="17">
    <citation type="journal article" date="2011" name="BMC Syst. Biol.">
        <title>Initial characterization of the human central proteome.</title>
        <authorList>
            <person name="Burkard T.R."/>
            <person name="Planyavsky M."/>
            <person name="Kaupe I."/>
            <person name="Breitwieser F.P."/>
            <person name="Buerckstuemmer T."/>
            <person name="Bennett K.L."/>
            <person name="Superti-Furga G."/>
            <person name="Colinge J."/>
        </authorList>
    </citation>
    <scope>IDENTIFICATION BY MASS SPECTROMETRY [LARGE SCALE ANALYSIS]</scope>
</reference>
<reference key="18">
    <citation type="journal article" date="2014" name="Curr. Opin. Struct. Biol.">
        <title>A new system for naming ribosomal proteins.</title>
        <authorList>
            <person name="Ban N."/>
            <person name="Beckmann R."/>
            <person name="Cate J.H.D."/>
            <person name="Dinman J.D."/>
            <person name="Dragon F."/>
            <person name="Ellis S.R."/>
            <person name="Lafontaine D.L.J."/>
            <person name="Lindahl L."/>
            <person name="Liljas A."/>
            <person name="Lipton J.M."/>
            <person name="McAlear M.A."/>
            <person name="Moore P.B."/>
            <person name="Noller H.F."/>
            <person name="Ortega J."/>
            <person name="Panse V.G."/>
            <person name="Ramakrishnan V."/>
            <person name="Spahn C.M.T."/>
            <person name="Steitz T.A."/>
            <person name="Tchorzewski M."/>
            <person name="Tollervey D."/>
            <person name="Warren A.J."/>
            <person name="Williamson J.R."/>
            <person name="Wilson D."/>
            <person name="Yonath A."/>
            <person name="Yusupov M."/>
        </authorList>
    </citation>
    <scope>NOMENCLATURE</scope>
</reference>
<reference key="19">
    <citation type="journal article" date="2014" name="J. Proteomics">
        <title>An enzyme assisted RP-RPLC approach for in-depth analysis of human liver phosphoproteome.</title>
        <authorList>
            <person name="Bian Y."/>
            <person name="Song C."/>
            <person name="Cheng K."/>
            <person name="Dong M."/>
            <person name="Wang F."/>
            <person name="Huang J."/>
            <person name="Sun D."/>
            <person name="Wang L."/>
            <person name="Ye M."/>
            <person name="Zou H."/>
        </authorList>
    </citation>
    <scope>IDENTIFICATION BY MASS SPECTROMETRY [LARGE SCALE ANALYSIS]</scope>
    <source>
        <tissue>Liver</tissue>
    </source>
</reference>
<reference key="20">
    <citation type="journal article" date="2015" name="Proteomics">
        <title>N-terminome analysis of the human mitochondrial proteome.</title>
        <authorList>
            <person name="Vaca Jacome A.S."/>
            <person name="Rabilloud T."/>
            <person name="Schaeffer-Reiss C."/>
            <person name="Rompais M."/>
            <person name="Ayoub D."/>
            <person name="Lane L."/>
            <person name="Bairoch A."/>
            <person name="Van Dorsselaer A."/>
            <person name="Carapito C."/>
        </authorList>
    </citation>
    <scope>IDENTIFICATION BY MASS SPECTROMETRY [LARGE SCALE ANALYSIS]</scope>
</reference>
<reference key="21">
    <citation type="journal article" date="2017" name="Nat. Struct. Mol. Biol.">
        <title>Site-specific mapping of the human SUMO proteome reveals co-modification with phosphorylation.</title>
        <authorList>
            <person name="Hendriks I.A."/>
            <person name="Lyon D."/>
            <person name="Young C."/>
            <person name="Jensen L.J."/>
            <person name="Vertegaal A.C."/>
            <person name="Nielsen M.L."/>
        </authorList>
    </citation>
    <scope>SUMOYLATION [LARGE SCALE ANALYSIS] AT LYS-175</scope>
    <scope>IDENTIFICATION BY MASS SPECTROMETRY [LARGE SCALE ANALYSIS]</scope>
</reference>
<reference key="22">
    <citation type="journal article" date="2008" name="J. Mol. Biol.">
        <title>Crystal structure of human ribosomal protein L10 core domain reveals eukaryote-specific motifs in addition to the conserved fold.</title>
        <authorList>
            <person name="Nishimura M."/>
            <person name="Kaminishi T."/>
            <person name="Takemoto C."/>
            <person name="Kawazoe M."/>
            <person name="Yoshida T."/>
            <person name="Tanaka A."/>
            <person name="Sugano S."/>
            <person name="Shirouzu M."/>
            <person name="Ohkubo T."/>
            <person name="Yokoyama S."/>
            <person name="Kobayashi Y."/>
        </authorList>
    </citation>
    <scope>X-RAY CRYSTALLOGRAPHY (2.5 ANGSTROMS) OF 34-182</scope>
</reference>
<reference key="23">
    <citation type="journal article" date="2006" name="Mol. Psychiatry">
        <title>Mutations in the ribosomal protein gene RPL10 suggest a novel modulating disease mechanism for autism.</title>
        <authorList>
            <person name="Klauck S.M."/>
            <person name="Felder B."/>
            <person name="Kolb-Kokocinski A."/>
            <person name="Schuster C."/>
            <person name="Chiocchetti A."/>
            <person name="Schupp I."/>
            <person name="Wellenreuther R."/>
            <person name="Schmoetzer G."/>
            <person name="Poustka F."/>
            <person name="Breitenbach-Koller L."/>
            <person name="Poustka A."/>
        </authorList>
    </citation>
    <scope>INVOLVEMENT IN AUTSX5</scope>
    <scope>VARIANTS MET-206 AND GLN-213</scope>
</reference>
<reference key="24">
    <citation type="journal article" date="2011" name="Am. J. Med. Genet. A">
        <title>Mutation and expression analyses of the ribosomal protein gene RPL10 in an extended German sample of patients with autism spectrum disorder.</title>
        <authorList>
            <person name="Chiocchetti A."/>
            <person name="Pakalapati G."/>
            <person name="Duketis E."/>
            <person name="Wiemann S."/>
            <person name="Poustka A."/>
            <person name="Poustka F."/>
            <person name="Klauck S.M."/>
        </authorList>
    </citation>
    <scope>VARIANT GLN-213</scope>
    <scope>INVOLVEMENT IN AUTSX5</scope>
</reference>
<reference key="25">
    <citation type="journal article" date="2014" name="Genetics">
        <title>A novel ribosomopathy caused by dysfunction of RPL10 disrupts neurodevelopment and causes X-linked microcephaly in humans.</title>
        <authorList>
            <person name="Brooks S.S."/>
            <person name="Wall A.L."/>
            <person name="Golzio C."/>
            <person name="Reid D.W."/>
            <person name="Kondyles A."/>
            <person name="Willer J.R."/>
            <person name="Botti C."/>
            <person name="Nicchitta C.V."/>
            <person name="Katsanis N."/>
            <person name="Davis E.E."/>
        </authorList>
    </citation>
    <scope>VARIANT MRXS35 GLU-78</scope>
    <scope>CHARACTERIZATION OF VARIANT MRXS35 GLU-78</scope>
    <scope>INVOLVEMENT IN MRXS35</scope>
    <scope>VARIANT ASN-202</scope>
    <scope>CHARACTERIZATION OF VARIANTS ASN-202; MET-206 AND GLN-213</scope>
    <scope>FUNCTION</scope>
</reference>
<reference key="26">
    <citation type="journal article" date="2015" name="Am. J. Med. Genet. A">
        <title>RPL10 mutation segregating in a family with X-linked syndromic Intellectual Disability.</title>
        <authorList>
            <person name="Thevenon J."/>
            <person name="Michot C."/>
            <person name="Bole C."/>
            <person name="Nitschke P."/>
            <person name="Nizon M."/>
            <person name="Faivre L."/>
            <person name="Munnich A."/>
            <person name="Lyonnet S."/>
            <person name="Bonnefont J.P."/>
            <person name="Portes V.D."/>
            <person name="Amiel J."/>
        </authorList>
    </citation>
    <scope>VARIANT MRXS35 SER-161</scope>
</reference>
<reference key="27">
    <citation type="journal article" date="2015" name="Hum. Mutat.">
        <title>A novel mutation in RPL10 (Ribosomal Protein L10) causes X-Linked intellectual disability, cerebellar hypoplasia, and spondylo-epiphyseal dysplasia.</title>
        <authorList>
            <person name="Zanni G."/>
            <person name="Kalscheuer V.M."/>
            <person name="Friedrich A."/>
            <person name="Barresi S."/>
            <person name="Alfieri P."/>
            <person name="Di Capua M."/>
            <person name="Haas S.A."/>
            <person name="Piccini G."/>
            <person name="Karl T."/>
            <person name="Klauck S.M."/>
            <person name="Bellacchio E."/>
            <person name="Emma F."/>
            <person name="Cappa M."/>
            <person name="Bertini E."/>
            <person name="Breitenbach-Koller L."/>
        </authorList>
    </citation>
    <scope>VARIANT MRXS35 VAL-64</scope>
    <scope>CHARACTERIZATION OF VARIANT MRXS35 VAL-64</scope>
    <scope>FUNCTION</scope>
</reference>
<dbReference type="EMBL" id="M64241">
    <property type="protein sequence ID" value="AAA63253.1"/>
    <property type="molecule type" value="mRNA"/>
</dbReference>
<dbReference type="EMBL" id="M81806">
    <property type="protein sequence ID" value="AAA36021.1"/>
    <property type="molecule type" value="Genomic_DNA"/>
</dbReference>
<dbReference type="EMBL" id="M73791">
    <property type="protein sequence ID" value="AAA36378.1"/>
    <property type="molecule type" value="mRNA"/>
</dbReference>
<dbReference type="EMBL" id="S64169">
    <property type="protein sequence ID" value="AAB27665.1"/>
    <property type="molecule type" value="Genomic_DNA"/>
</dbReference>
<dbReference type="EMBL" id="S64168">
    <property type="protein sequence ID" value="AAB27665.1"/>
    <property type="status" value="JOINED"/>
    <property type="molecule type" value="Genomic_DNA"/>
</dbReference>
<dbReference type="EMBL" id="AF486812">
    <property type="protein sequence ID" value="AAL88713.1"/>
    <property type="molecule type" value="mRNA"/>
</dbReference>
<dbReference type="EMBL" id="DQ369703">
    <property type="protein sequence ID" value="ABC88559.1"/>
    <property type="molecule type" value="mRNA"/>
</dbReference>
<dbReference type="EMBL" id="DQ369704">
    <property type="protein sequence ID" value="ABC88560.1"/>
    <property type="molecule type" value="mRNA"/>
</dbReference>
<dbReference type="EMBL" id="DQ369705">
    <property type="protein sequence ID" value="ABC88561.1"/>
    <property type="molecule type" value="mRNA"/>
</dbReference>
<dbReference type="EMBL" id="DQ369706">
    <property type="protein sequence ID" value="ABC88562.1"/>
    <property type="molecule type" value="mRNA"/>
</dbReference>
<dbReference type="EMBL" id="DQ369707">
    <property type="protein sequence ID" value="ABC88563.1"/>
    <property type="molecule type" value="mRNA"/>
</dbReference>
<dbReference type="EMBL" id="DQ369708">
    <property type="protein sequence ID" value="ABC88564.1"/>
    <property type="molecule type" value="mRNA"/>
</dbReference>
<dbReference type="EMBL" id="DQ369709">
    <property type="protein sequence ID" value="ABC88565.1"/>
    <property type="molecule type" value="mRNA"/>
</dbReference>
<dbReference type="EMBL" id="DQ369710">
    <property type="protein sequence ID" value="ABC88566.1"/>
    <property type="molecule type" value="mRNA"/>
</dbReference>
<dbReference type="EMBL" id="DQ369711">
    <property type="protein sequence ID" value="ABC88567.1"/>
    <property type="molecule type" value="mRNA"/>
</dbReference>
<dbReference type="EMBL" id="DQ369712">
    <property type="protein sequence ID" value="ABC88568.1"/>
    <property type="molecule type" value="mRNA"/>
</dbReference>
<dbReference type="EMBL" id="DQ369713">
    <property type="protein sequence ID" value="ABC88569.1"/>
    <property type="molecule type" value="mRNA"/>
</dbReference>
<dbReference type="EMBL" id="DQ369714">
    <property type="protein sequence ID" value="ABC88570.1"/>
    <property type="molecule type" value="mRNA"/>
</dbReference>
<dbReference type="EMBL" id="DQ369715">
    <property type="protein sequence ID" value="ABC88571.1"/>
    <property type="molecule type" value="mRNA"/>
</dbReference>
<dbReference type="EMBL" id="DQ369716">
    <property type="protein sequence ID" value="ABC88572.1"/>
    <property type="molecule type" value="mRNA"/>
</dbReference>
<dbReference type="EMBL" id="CR456797">
    <property type="protein sequence ID" value="CAG33078.1"/>
    <property type="molecule type" value="mRNA"/>
</dbReference>
<dbReference type="EMBL" id="CR542069">
    <property type="protein sequence ID" value="CAG46866.1"/>
    <property type="molecule type" value="mRNA"/>
</dbReference>
<dbReference type="EMBL" id="AK223309">
    <property type="protein sequence ID" value="BAD97029.1"/>
    <property type="molecule type" value="mRNA"/>
</dbReference>
<dbReference type="EMBL" id="L44140">
    <property type="protein sequence ID" value="AAA92646.1"/>
    <property type="molecule type" value="Genomic_DNA"/>
</dbReference>
<dbReference type="EMBL" id="BX936346">
    <property type="status" value="NOT_ANNOTATED_CDS"/>
    <property type="molecule type" value="Genomic_DNA"/>
</dbReference>
<dbReference type="EMBL" id="BX936347">
    <property type="status" value="NOT_ANNOTATED_CDS"/>
    <property type="molecule type" value="Genomic_DNA"/>
</dbReference>
<dbReference type="EMBL" id="CH471172">
    <property type="protein sequence ID" value="EAW72737.1"/>
    <property type="molecule type" value="Genomic_DNA"/>
</dbReference>
<dbReference type="EMBL" id="CH471172">
    <property type="protein sequence ID" value="EAW72739.1"/>
    <property type="molecule type" value="Genomic_DNA"/>
</dbReference>
<dbReference type="EMBL" id="BC003358">
    <property type="protein sequence ID" value="AAH03358.1"/>
    <property type="molecule type" value="mRNA"/>
</dbReference>
<dbReference type="EMBL" id="BC026276">
    <property type="protein sequence ID" value="AAH26276.1"/>
    <property type="molecule type" value="mRNA"/>
</dbReference>
<dbReference type="EMBL" id="BC071918">
    <property type="protein sequence ID" value="AAH71918.1"/>
    <property type="molecule type" value="mRNA"/>
</dbReference>
<dbReference type="EMBL" id="S35960">
    <property type="protein sequence ID" value="AAB22173.1"/>
    <property type="status" value="ALT_FRAME"/>
    <property type="molecule type" value="mRNA"/>
</dbReference>
<dbReference type="EMBL" id="AB007170">
    <property type="protein sequence ID" value="BAA28595.1"/>
    <property type="molecule type" value="Genomic_DNA"/>
</dbReference>
<dbReference type="CCDS" id="CCDS14746.1"/>
<dbReference type="PIR" id="A42735">
    <property type="entry name" value="A42735"/>
</dbReference>
<dbReference type="RefSeq" id="NP_001243506.2">
    <property type="nucleotide sequence ID" value="NM_001256577.2"/>
</dbReference>
<dbReference type="RefSeq" id="NP_001243509.2">
    <property type="nucleotide sequence ID" value="NM_001256580.2"/>
</dbReference>
<dbReference type="RefSeq" id="NP_001290553.1">
    <property type="nucleotide sequence ID" value="NM_001303624.2"/>
</dbReference>
<dbReference type="RefSeq" id="NP_001290554.1">
    <property type="nucleotide sequence ID" value="NM_001303625.1"/>
</dbReference>
<dbReference type="RefSeq" id="NP_001290555.1">
    <property type="nucleotide sequence ID" value="NM_001303626.1"/>
</dbReference>
<dbReference type="RefSeq" id="NP_006004.3">
    <property type="nucleotide sequence ID" value="NM_006013.5"/>
</dbReference>
<dbReference type="PDB" id="2PA2">
    <property type="method" value="X-ray"/>
    <property type="resolution" value="2.50 A"/>
    <property type="chains" value="A/B=34-182"/>
</dbReference>
<dbReference type="PDB" id="5AJ0">
    <property type="method" value="EM"/>
    <property type="resolution" value="3.50 A"/>
    <property type="chains" value="AI=1-214"/>
</dbReference>
<dbReference type="PDB" id="6OLE">
    <property type="method" value="EM"/>
    <property type="resolution" value="3.10 A"/>
    <property type="chains" value="K=3-213"/>
</dbReference>
<dbReference type="PDB" id="6OLF">
    <property type="method" value="EM"/>
    <property type="resolution" value="3.90 A"/>
    <property type="chains" value="K=3-213"/>
</dbReference>
<dbReference type="PDB" id="6OLG">
    <property type="method" value="EM"/>
    <property type="resolution" value="3.40 A"/>
    <property type="chains" value="AI=3-213"/>
</dbReference>
<dbReference type="PDB" id="6OLI">
    <property type="method" value="EM"/>
    <property type="resolution" value="3.50 A"/>
    <property type="chains" value="K=3-213"/>
</dbReference>
<dbReference type="PDB" id="6OLZ">
    <property type="method" value="EM"/>
    <property type="resolution" value="3.90 A"/>
    <property type="chains" value="AI=3-213"/>
</dbReference>
<dbReference type="PDB" id="6OM0">
    <property type="method" value="EM"/>
    <property type="resolution" value="3.10 A"/>
    <property type="chains" value="K=3-213"/>
</dbReference>
<dbReference type="PDB" id="6OM7">
    <property type="method" value="EM"/>
    <property type="resolution" value="3.70 A"/>
    <property type="chains" value="K=3-213"/>
</dbReference>
<dbReference type="PDB" id="6W6L">
    <property type="method" value="EM"/>
    <property type="resolution" value="3.84 A"/>
    <property type="chains" value="K=1-214"/>
</dbReference>
<dbReference type="PDB" id="7F5S">
    <property type="method" value="EM"/>
    <property type="resolution" value="2.72 A"/>
    <property type="chains" value="LI=1-214"/>
</dbReference>
<dbReference type="PDB" id="8A3D">
    <property type="method" value="EM"/>
    <property type="resolution" value="1.67 A"/>
    <property type="chains" value="p=1-214"/>
</dbReference>
<dbReference type="PDB" id="8FLD">
    <property type="method" value="EM"/>
    <property type="resolution" value="2.58 A"/>
    <property type="chains" value="BE=1-214"/>
</dbReference>
<dbReference type="PDB" id="8FLE">
    <property type="method" value="EM"/>
    <property type="resolution" value="2.48 A"/>
    <property type="chains" value="BE=1-214"/>
</dbReference>
<dbReference type="PDB" id="8FLF">
    <property type="method" value="EM"/>
    <property type="resolution" value="2.65 A"/>
    <property type="chains" value="BE=1-214"/>
</dbReference>
<dbReference type="PDB" id="8G5Y">
    <property type="method" value="EM"/>
    <property type="resolution" value="2.29 A"/>
    <property type="chains" value="LI=1-214"/>
</dbReference>
<dbReference type="PDB" id="8G5Z">
    <property type="method" value="EM"/>
    <property type="resolution" value="2.64 A"/>
    <property type="chains" value="LI=2-214"/>
</dbReference>
<dbReference type="PDB" id="8G60">
    <property type="method" value="EM"/>
    <property type="resolution" value="2.54 A"/>
    <property type="chains" value="LI=1-214"/>
</dbReference>
<dbReference type="PDB" id="8G61">
    <property type="method" value="EM"/>
    <property type="resolution" value="2.94 A"/>
    <property type="chains" value="LI=1-214"/>
</dbReference>
<dbReference type="PDB" id="8G6J">
    <property type="method" value="EM"/>
    <property type="resolution" value="2.80 A"/>
    <property type="chains" value="LI=1-214"/>
</dbReference>
<dbReference type="PDB" id="8GLP">
    <property type="method" value="EM"/>
    <property type="resolution" value="1.67 A"/>
    <property type="chains" value="LI=1-214"/>
</dbReference>
<dbReference type="PDB" id="8K2C">
    <property type="method" value="EM"/>
    <property type="resolution" value="2.40 A"/>
    <property type="chains" value="LI=1-214"/>
</dbReference>
<dbReference type="PDB" id="8QFD">
    <property type="method" value="EM"/>
    <property type="resolution" value="2.20 A"/>
    <property type="chains" value="I=1-214"/>
</dbReference>
<dbReference type="PDB" id="8XSY">
    <property type="method" value="EM"/>
    <property type="resolution" value="3.00 A"/>
    <property type="chains" value="LI=1-214"/>
</dbReference>
<dbReference type="PDB" id="8XSZ">
    <property type="method" value="EM"/>
    <property type="resolution" value="3.20 A"/>
    <property type="chains" value="LI=1-214"/>
</dbReference>
<dbReference type="PDB" id="8YOO">
    <property type="method" value="EM"/>
    <property type="resolution" value="2.00 A"/>
    <property type="chains" value="LI=1-214"/>
</dbReference>
<dbReference type="PDB" id="8YOP">
    <property type="method" value="EM"/>
    <property type="resolution" value="2.20 A"/>
    <property type="chains" value="LI=1-214"/>
</dbReference>
<dbReference type="PDB" id="9C3H">
    <property type="method" value="EM"/>
    <property type="resolution" value="2.00 A"/>
    <property type="chains" value="Lz=1-214"/>
</dbReference>
<dbReference type="PDB" id="9GMO">
    <property type="method" value="EM"/>
    <property type="resolution" value="2.59 A"/>
    <property type="chains" value="p=1-214"/>
</dbReference>
<dbReference type="PDBsum" id="2PA2"/>
<dbReference type="PDBsum" id="5AJ0"/>
<dbReference type="PDBsum" id="6OLE"/>
<dbReference type="PDBsum" id="6OLF"/>
<dbReference type="PDBsum" id="6OLG"/>
<dbReference type="PDBsum" id="6OLI"/>
<dbReference type="PDBsum" id="6OLZ"/>
<dbReference type="PDBsum" id="6OM0"/>
<dbReference type="PDBsum" id="6OM7"/>
<dbReference type="PDBsum" id="6W6L"/>
<dbReference type="PDBsum" id="7F5S"/>
<dbReference type="PDBsum" id="8A3D"/>
<dbReference type="PDBsum" id="8FLD"/>
<dbReference type="PDBsum" id="8FLE"/>
<dbReference type="PDBsum" id="8FLF"/>
<dbReference type="PDBsum" id="8G5Y"/>
<dbReference type="PDBsum" id="8G5Z"/>
<dbReference type="PDBsum" id="8G60"/>
<dbReference type="PDBsum" id="8G61"/>
<dbReference type="PDBsum" id="8G6J"/>
<dbReference type="PDBsum" id="8GLP"/>
<dbReference type="PDBsum" id="8K2C"/>
<dbReference type="PDBsum" id="8QFD"/>
<dbReference type="PDBsum" id="8XSY"/>
<dbReference type="PDBsum" id="8XSZ"/>
<dbReference type="PDBsum" id="8YOO"/>
<dbReference type="PDBsum" id="8YOP"/>
<dbReference type="PDBsum" id="9C3H"/>
<dbReference type="PDBsum" id="9GMO"/>
<dbReference type="EMDB" id="EMD-15113"/>
<dbReference type="EMDB" id="EMD-18382"/>
<dbReference type="EMDB" id="EMD-29275"/>
<dbReference type="EMDB" id="EMD-29276"/>
<dbReference type="EMDB" id="EMD-29277"/>
<dbReference type="EMDB" id="EMD-29757"/>
<dbReference type="EMDB" id="EMD-29758"/>
<dbReference type="EMDB" id="EMD-29759"/>
<dbReference type="EMDB" id="EMD-29760"/>
<dbReference type="EMDB" id="EMD-29771"/>
<dbReference type="EMDB" id="EMD-31465"/>
<dbReference type="EMDB" id="EMD-36838"/>
<dbReference type="EMDB" id="EMD-38630"/>
<dbReference type="EMDB" id="EMD-38631"/>
<dbReference type="EMDB" id="EMD-39455"/>
<dbReference type="EMDB" id="EMD-39456"/>
<dbReference type="EMDB" id="EMD-40205"/>
<dbReference type="EMDB" id="EMD-45170"/>
<dbReference type="EMDB" id="EMD-51452"/>
<dbReference type="SMR" id="P27635"/>
<dbReference type="BioGRID" id="112054">
    <property type="interactions" value="746"/>
</dbReference>
<dbReference type="ComplexPortal" id="CPX-5183">
    <property type="entry name" value="60S cytosolic large ribosomal subunit"/>
</dbReference>
<dbReference type="ComplexPortal" id="CPX-7665">
    <property type="entry name" value="60S cytosolic large ribosomal subunit, striated muscle variant"/>
</dbReference>
<dbReference type="CORUM" id="P27635"/>
<dbReference type="DIP" id="DIP-1133N"/>
<dbReference type="FunCoup" id="P27635">
    <property type="interactions" value="1938"/>
</dbReference>
<dbReference type="IntAct" id="P27635">
    <property type="interactions" value="370"/>
</dbReference>
<dbReference type="MINT" id="P27635"/>
<dbReference type="STRING" id="9606.ENSP00000413436"/>
<dbReference type="DrugBank" id="DB11638">
    <property type="generic name" value="Artenimol"/>
</dbReference>
<dbReference type="MoonProt" id="P27635"/>
<dbReference type="GlyGen" id="P27635">
    <property type="glycosylation" value="1 site, 1 O-linked glycan (1 site)"/>
</dbReference>
<dbReference type="iPTMnet" id="P27635"/>
<dbReference type="MetOSite" id="P27635"/>
<dbReference type="PhosphoSitePlus" id="P27635"/>
<dbReference type="SwissPalm" id="P27635"/>
<dbReference type="BioMuta" id="RPL10"/>
<dbReference type="DMDM" id="148887414"/>
<dbReference type="jPOST" id="P27635"/>
<dbReference type="MassIVE" id="P27635"/>
<dbReference type="PaxDb" id="9606-ENSP00000413436"/>
<dbReference type="PeptideAtlas" id="P27635"/>
<dbReference type="ProteomicsDB" id="54403"/>
<dbReference type="Pumba" id="P27635"/>
<dbReference type="TopDownProteomics" id="P27635"/>
<dbReference type="Antibodypedia" id="1254">
    <property type="antibodies" value="296 antibodies from 32 providers"/>
</dbReference>
<dbReference type="DNASU" id="6134"/>
<dbReference type="Ensembl" id="ENST00000344746.8">
    <property type="protein sequence ID" value="ENSP00000341730.4"/>
    <property type="gene ID" value="ENSG00000147403.18"/>
</dbReference>
<dbReference type="Ensembl" id="ENST00000369817.7">
    <property type="protein sequence ID" value="ENSP00000358832.2"/>
    <property type="gene ID" value="ENSG00000147403.18"/>
</dbReference>
<dbReference type="GeneID" id="6134"/>
<dbReference type="KEGG" id="hsa:6134"/>
<dbReference type="MANE-Select" id="ENST00000369817.7">
    <property type="protein sequence ID" value="ENSP00000358832.2"/>
    <property type="RefSeq nucleotide sequence ID" value="NM_006013.5"/>
    <property type="RefSeq protein sequence ID" value="NP_006004.3"/>
</dbReference>
<dbReference type="AGR" id="HGNC:10298"/>
<dbReference type="CTD" id="6134"/>
<dbReference type="DisGeNET" id="6134"/>
<dbReference type="GeneCards" id="RPL10"/>
<dbReference type="HGNC" id="HGNC:10298">
    <property type="gene designation" value="RPL10"/>
</dbReference>
<dbReference type="HPA" id="ENSG00000147403">
    <property type="expression patterns" value="Low tissue specificity"/>
</dbReference>
<dbReference type="MalaCards" id="RPL10"/>
<dbReference type="MIM" id="300847">
    <property type="type" value="phenotype"/>
</dbReference>
<dbReference type="MIM" id="300998">
    <property type="type" value="phenotype"/>
</dbReference>
<dbReference type="MIM" id="312173">
    <property type="type" value="gene"/>
</dbReference>
<dbReference type="neXtProt" id="NX_P27635"/>
<dbReference type="OpenTargets" id="ENSG00000147403"/>
<dbReference type="Orphanet" id="459070">
    <property type="disease" value="X-linked intellectual disability-cerebellar hypoplasia-spondylo-epiphyseal dysplasia syndrome"/>
</dbReference>
<dbReference type="Orphanet" id="435938">
    <property type="disease" value="X-linked microcephaly-growth retardation-prognathism-cryptorchidism syndrome"/>
</dbReference>
<dbReference type="PharmGKB" id="PA34660"/>
<dbReference type="VEuPathDB" id="HostDB:ENSG00000147403"/>
<dbReference type="eggNOG" id="KOG0857">
    <property type="taxonomic scope" value="Eukaryota"/>
</dbReference>
<dbReference type="GeneTree" id="ENSGT00390000003897"/>
<dbReference type="InParanoid" id="P27635"/>
<dbReference type="OMA" id="CICASKY"/>
<dbReference type="OrthoDB" id="9507708at2759"/>
<dbReference type="PAN-GO" id="P27635">
    <property type="GO annotations" value="3 GO annotations based on evolutionary models"/>
</dbReference>
<dbReference type="PhylomeDB" id="P27635"/>
<dbReference type="TreeFam" id="TF300082"/>
<dbReference type="PathwayCommons" id="P27635"/>
<dbReference type="Reactome" id="R-HSA-156827">
    <property type="pathway name" value="L13a-mediated translational silencing of Ceruloplasmin expression"/>
</dbReference>
<dbReference type="Reactome" id="R-HSA-156902">
    <property type="pathway name" value="Peptide chain elongation"/>
</dbReference>
<dbReference type="Reactome" id="R-HSA-1799339">
    <property type="pathway name" value="SRP-dependent cotranslational protein targeting to membrane"/>
</dbReference>
<dbReference type="Reactome" id="R-HSA-192823">
    <property type="pathway name" value="Viral mRNA Translation"/>
</dbReference>
<dbReference type="Reactome" id="R-HSA-2408557">
    <property type="pathway name" value="Selenocysteine synthesis"/>
</dbReference>
<dbReference type="Reactome" id="R-HSA-6791226">
    <property type="pathway name" value="Major pathway of rRNA processing in the nucleolus and cytosol"/>
</dbReference>
<dbReference type="Reactome" id="R-HSA-72689">
    <property type="pathway name" value="Formation of a pool of free 40S subunits"/>
</dbReference>
<dbReference type="Reactome" id="R-HSA-72706">
    <property type="pathway name" value="GTP hydrolysis and joining of the 60S ribosomal subunit"/>
</dbReference>
<dbReference type="Reactome" id="R-HSA-72764">
    <property type="pathway name" value="Eukaryotic Translation Termination"/>
</dbReference>
<dbReference type="Reactome" id="R-HSA-9010553">
    <property type="pathway name" value="Regulation of expression of SLITs and ROBOs"/>
</dbReference>
<dbReference type="Reactome" id="R-HSA-9633012">
    <property type="pathway name" value="Response of EIF2AK4 (GCN2) to amino acid deficiency"/>
</dbReference>
<dbReference type="Reactome" id="R-HSA-975956">
    <property type="pathway name" value="Nonsense Mediated Decay (NMD) independent of the Exon Junction Complex (EJC)"/>
</dbReference>
<dbReference type="Reactome" id="R-HSA-975957">
    <property type="pathway name" value="Nonsense Mediated Decay (NMD) enhanced by the Exon Junction Complex (EJC)"/>
</dbReference>
<dbReference type="SignaLink" id="P27635"/>
<dbReference type="SIGNOR" id="P27635"/>
<dbReference type="BioGRID-ORCS" id="6134">
    <property type="hits" value="212 hits in 760 CRISPR screens"/>
</dbReference>
<dbReference type="CD-CODE" id="232F8A39">
    <property type="entry name" value="P-body"/>
</dbReference>
<dbReference type="CD-CODE" id="91857CE7">
    <property type="entry name" value="Nucleolus"/>
</dbReference>
<dbReference type="CD-CODE" id="DEE660B4">
    <property type="entry name" value="Stress granule"/>
</dbReference>
<dbReference type="ChiTaRS" id="RPL10">
    <property type="organism name" value="human"/>
</dbReference>
<dbReference type="EvolutionaryTrace" id="P27635"/>
<dbReference type="GeneWiki" id="RPL10"/>
<dbReference type="GenomeRNAi" id="6134"/>
<dbReference type="Pharos" id="P27635">
    <property type="development level" value="Tbio"/>
</dbReference>
<dbReference type="PRO" id="PR:P27635"/>
<dbReference type="Proteomes" id="UP000005640">
    <property type="component" value="Chromosome X"/>
</dbReference>
<dbReference type="RNAct" id="P27635">
    <property type="molecule type" value="protein"/>
</dbReference>
<dbReference type="Bgee" id="ENSG00000147403">
    <property type="expression patterns" value="Expressed in left ovary and 97 other cell types or tissues"/>
</dbReference>
<dbReference type="ExpressionAtlas" id="P27635">
    <property type="expression patterns" value="baseline and differential"/>
</dbReference>
<dbReference type="GO" id="GO:0005829">
    <property type="term" value="C:cytosol"/>
    <property type="evidence" value="ECO:0000314"/>
    <property type="project" value="HPA"/>
</dbReference>
<dbReference type="GO" id="GO:0022625">
    <property type="term" value="C:cytosolic large ribosomal subunit"/>
    <property type="evidence" value="ECO:0000314"/>
    <property type="project" value="UniProtKB"/>
</dbReference>
<dbReference type="GO" id="GO:0022626">
    <property type="term" value="C:cytosolic ribosome"/>
    <property type="evidence" value="ECO:0000314"/>
    <property type="project" value="FlyBase"/>
</dbReference>
<dbReference type="GO" id="GO:0005783">
    <property type="term" value="C:endoplasmic reticulum"/>
    <property type="evidence" value="ECO:0000314"/>
    <property type="project" value="LIFEdb"/>
</dbReference>
<dbReference type="GO" id="GO:0016020">
    <property type="term" value="C:membrane"/>
    <property type="evidence" value="ECO:0007005"/>
    <property type="project" value="UniProtKB"/>
</dbReference>
<dbReference type="GO" id="GO:0005634">
    <property type="term" value="C:nucleus"/>
    <property type="evidence" value="ECO:0000314"/>
    <property type="project" value="CAFA"/>
</dbReference>
<dbReference type="GO" id="GO:0032991">
    <property type="term" value="C:protein-containing complex"/>
    <property type="evidence" value="ECO:0000314"/>
    <property type="project" value="CAFA"/>
</dbReference>
<dbReference type="GO" id="GO:0003723">
    <property type="term" value="F:RNA binding"/>
    <property type="evidence" value="ECO:0007005"/>
    <property type="project" value="UniProtKB"/>
</dbReference>
<dbReference type="GO" id="GO:0003735">
    <property type="term" value="F:structural constituent of ribosome"/>
    <property type="evidence" value="ECO:0000314"/>
    <property type="project" value="FlyBase"/>
</dbReference>
<dbReference type="GO" id="GO:0045182">
    <property type="term" value="F:translation regulator activity"/>
    <property type="evidence" value="ECO:0000315"/>
    <property type="project" value="UniProtKB"/>
</dbReference>
<dbReference type="GO" id="GO:0002181">
    <property type="term" value="P:cytoplasmic translation"/>
    <property type="evidence" value="ECO:0000305"/>
    <property type="project" value="FlyBase"/>
</dbReference>
<dbReference type="GO" id="GO:1990403">
    <property type="term" value="P:embryonic brain development"/>
    <property type="evidence" value="ECO:0000315"/>
    <property type="project" value="UniProtKB"/>
</dbReference>
<dbReference type="GO" id="GO:0043066">
    <property type="term" value="P:negative regulation of apoptotic process"/>
    <property type="evidence" value="ECO:0000315"/>
    <property type="project" value="CAFA"/>
</dbReference>
<dbReference type="GO" id="GO:0000122">
    <property type="term" value="P:negative regulation of transcription by RNA polymerase II"/>
    <property type="evidence" value="ECO:0000315"/>
    <property type="project" value="CAFA"/>
</dbReference>
<dbReference type="GO" id="GO:0006417">
    <property type="term" value="P:regulation of translation"/>
    <property type="evidence" value="ECO:0000315"/>
    <property type="project" value="UniProtKB"/>
</dbReference>
<dbReference type="GO" id="GO:0006412">
    <property type="term" value="P:translation"/>
    <property type="evidence" value="ECO:0000318"/>
    <property type="project" value="GO_Central"/>
</dbReference>
<dbReference type="CDD" id="cd01433">
    <property type="entry name" value="Ribosomal_L16_L10e"/>
    <property type="match status" value="1"/>
</dbReference>
<dbReference type="FunFam" id="3.30.60.300:FF:000001">
    <property type="entry name" value="60S ribosomal protein L10"/>
    <property type="match status" value="1"/>
</dbReference>
<dbReference type="FunFam" id="3.90.1170.10:FF:000002">
    <property type="entry name" value="60S ribosomal protein L10"/>
    <property type="match status" value="1"/>
</dbReference>
<dbReference type="Gene3D" id="3.30.60.300">
    <property type="match status" value="1"/>
</dbReference>
<dbReference type="Gene3D" id="3.90.1170.10">
    <property type="entry name" value="Ribosomal protein L10e/L16"/>
    <property type="match status" value="1"/>
</dbReference>
<dbReference type="InterPro" id="IPR047873">
    <property type="entry name" value="Ribosomal_uL16"/>
</dbReference>
<dbReference type="InterPro" id="IPR018255">
    <property type="entry name" value="Ribosomal_uL16_CS_euk_arc"/>
</dbReference>
<dbReference type="InterPro" id="IPR016180">
    <property type="entry name" value="Ribosomal_uL16_dom"/>
</dbReference>
<dbReference type="InterPro" id="IPR001197">
    <property type="entry name" value="Ribosomal_uL16_euk_arch"/>
</dbReference>
<dbReference type="InterPro" id="IPR036920">
    <property type="entry name" value="Ribosomal_uL16_sf"/>
</dbReference>
<dbReference type="NCBIfam" id="NF003239">
    <property type="entry name" value="PRK04199.1-4"/>
    <property type="match status" value="1"/>
</dbReference>
<dbReference type="NCBIfam" id="TIGR00279">
    <property type="entry name" value="uL16_euk_arch"/>
    <property type="match status" value="1"/>
</dbReference>
<dbReference type="PANTHER" id="PTHR11726">
    <property type="entry name" value="60S RIBOSOMAL PROTEIN L10"/>
    <property type="match status" value="1"/>
</dbReference>
<dbReference type="Pfam" id="PF00252">
    <property type="entry name" value="Ribosomal_L16"/>
    <property type="match status" value="1"/>
</dbReference>
<dbReference type="PIRSF" id="PIRSF005590">
    <property type="entry name" value="Ribosomal_L10"/>
    <property type="match status" value="1"/>
</dbReference>
<dbReference type="SUPFAM" id="SSF54686">
    <property type="entry name" value="Ribosomal protein L16p/L10e"/>
    <property type="match status" value="1"/>
</dbReference>
<dbReference type="PROSITE" id="PS01257">
    <property type="entry name" value="RIBOSOMAL_L10E"/>
    <property type="match status" value="1"/>
</dbReference>
<proteinExistence type="evidence at protein level"/>
<protein>
    <recommendedName>
        <fullName evidence="19">Large ribosomal subunit protein uL16</fullName>
    </recommendedName>
    <alternativeName>
        <fullName evidence="20">60S ribosomal protein L10</fullName>
    </alternativeName>
    <alternativeName>
        <fullName>Laminin receptor homolog</fullName>
    </alternativeName>
    <alternativeName>
        <fullName>Protein QM</fullName>
    </alternativeName>
    <alternativeName>
        <fullName evidence="22">Ribosomal protein L10</fullName>
    </alternativeName>
    <alternativeName>
        <fullName>Tumor suppressor QM</fullName>
    </alternativeName>
</protein>
<keyword id="KW-0002">3D-structure</keyword>
<keyword id="KW-1269">Autism</keyword>
<keyword id="KW-1268">Autism spectrum disorder</keyword>
<keyword id="KW-0164">Citrullination</keyword>
<keyword id="KW-0963">Cytoplasm</keyword>
<keyword id="KW-0217">Developmental protein</keyword>
<keyword id="KW-0903">Direct protein sequencing</keyword>
<keyword id="KW-0225">Disease variant</keyword>
<keyword id="KW-0991">Intellectual disability</keyword>
<keyword id="KW-1017">Isopeptide bond</keyword>
<keyword id="KW-1267">Proteomics identification</keyword>
<keyword id="KW-1185">Reference proteome</keyword>
<keyword id="KW-0687">Ribonucleoprotein</keyword>
<keyword id="KW-0689">Ribosomal protein</keyword>
<keyword id="KW-0832">Ubl conjugation</keyword>
<organism>
    <name type="scientific">Homo sapiens</name>
    <name type="common">Human</name>
    <dbReference type="NCBI Taxonomy" id="9606"/>
    <lineage>
        <taxon>Eukaryota</taxon>
        <taxon>Metazoa</taxon>
        <taxon>Chordata</taxon>
        <taxon>Craniata</taxon>
        <taxon>Vertebrata</taxon>
        <taxon>Euteleostomi</taxon>
        <taxon>Mammalia</taxon>
        <taxon>Eutheria</taxon>
        <taxon>Euarchontoglires</taxon>
        <taxon>Primates</taxon>
        <taxon>Haplorrhini</taxon>
        <taxon>Catarrhini</taxon>
        <taxon>Hominidae</taxon>
        <taxon>Homo</taxon>
    </lineage>
</organism>
<comment type="function">
    <text evidence="11 13 21">Component of the large ribosomal subunit (PubMed:26290468). Plays a role in the formation of actively translating ribosomes (PubMed:26290468). May play a role in the embryonic brain development (PubMed:25316788).</text>
</comment>
<comment type="subunit">
    <text evidence="21">Component of the large ribosomal subunit. Mature ribosomes consist of a small (40S) and a large (60S) subunit. The 40S subunit contains about 33 different proteins and 1 molecule of RNA (18S). The 60S subunit contains about 49 different proteins and 3 molecules of RNA (28S, 5.8S and 5S).</text>
</comment>
<comment type="interaction">
    <interactant intactId="EBI-352398">
        <id>P27635</id>
    </interactant>
    <interactant intactId="EBI-930964">
        <id>P54253</id>
        <label>ATXN1</label>
    </interactant>
    <organismsDiffer>false</organismsDiffer>
    <experiments>3</experiments>
</comment>
<comment type="interaction">
    <interactant intactId="EBI-352398">
        <id>P27635</id>
    </interactant>
    <interactant intactId="EBI-621482">
        <id>P12931</id>
        <label>SRC</label>
    </interactant>
    <organismsDiffer>false</organismsDiffer>
    <experiments>6</experiments>
</comment>
<comment type="subcellular location">
    <subcellularLocation>
        <location evidence="1">Cytoplasm</location>
    </subcellularLocation>
</comment>
<comment type="developmental stage">
    <text>Down-regulated during adipocyte, kidney, and heart differentiation.</text>
</comment>
<comment type="PTM">
    <text evidence="1">Citrullinated by PADI4.</text>
</comment>
<comment type="PTM">
    <text evidence="1">Ufmylated by UFL1.</text>
</comment>
<comment type="disease" evidence="9 10">
    <disease id="DI-03140">
        <name>Autism, X-linked 5</name>
        <acronym>AUTSX5</acronym>
        <description>A complex multifactorial, pervasive developmental disorder characterized by impairments in reciprocal social interaction and communication, restricted and stereotyped patterns of interests and activities, and the presence of developmental abnormalities by 3 years of age. Most individuals with autism also manifest moderate intellectual disability.</description>
        <dbReference type="MIM" id="300847"/>
    </disease>
    <text>Disease susceptibility is associated with variants affecting the gene represented in this entry. RPL10 is involved in autism only in rare cases. Two hypomorphic variants affecting the translation process have been found in families with autism spectrum disorders, suggesting that aberrant translation may play a role in disease mechanisms.</text>
</comment>
<comment type="disease" evidence="11 12 13">
    <disease id="DI-05030">
        <name>Intellectual developmental disorder, X-linked, syndromic 35</name>
        <acronym>MRXS35</acronym>
        <description>A syndrome characterized by intellectual deficit, delayed psychomotor development, poor speech, and dysmorphic features.</description>
        <dbReference type="MIM" id="300998"/>
    </disease>
    <text>The disease is caused by variants affecting the gene represented in this entry.</text>
</comment>
<comment type="similarity">
    <text evidence="20">Belongs to the universal ribosomal protein uL16 family.</text>
</comment>
<comment type="sequence caution" evidence="20">
    <conflict type="frameshift">
        <sequence resource="EMBL-CDS" id="AAB22173"/>
    </conflict>
</comment>
<comment type="online information" name="Atlas of Genetics and Cytogenetics in Oncology and Haematology">
    <link uri="https://atlasgeneticsoncology.org/gene/42148/RPL10"/>
</comment>
<evidence type="ECO:0000250" key="1">
    <source>
        <dbReference type="UniProtKB" id="Q6ZWV3"/>
    </source>
</evidence>
<evidence type="ECO:0000269" key="2">
    <source>
    </source>
</evidence>
<evidence type="ECO:0000269" key="3">
    <source>
    </source>
</evidence>
<evidence type="ECO:0000269" key="4">
    <source>
    </source>
</evidence>
<evidence type="ECO:0000269" key="5">
    <source>
    </source>
</evidence>
<evidence type="ECO:0000269" key="6">
    <source>
    </source>
</evidence>
<evidence type="ECO:0000269" key="7">
    <source>
    </source>
</evidence>
<evidence type="ECO:0000269" key="8">
    <source>
    </source>
</evidence>
<evidence type="ECO:0000269" key="9">
    <source>
    </source>
</evidence>
<evidence type="ECO:0000269" key="10">
    <source>
    </source>
</evidence>
<evidence type="ECO:0000269" key="11">
    <source>
    </source>
</evidence>
<evidence type="ECO:0000269" key="12">
    <source>
    </source>
</evidence>
<evidence type="ECO:0000269" key="13">
    <source>
    </source>
</evidence>
<evidence type="ECO:0000269" key="14">
    <source>
    </source>
</evidence>
<evidence type="ECO:0000269" key="15">
    <source ref="10"/>
</evidence>
<evidence type="ECO:0000269" key="16">
    <source ref="3"/>
</evidence>
<evidence type="ECO:0000269" key="17">
    <source ref="7"/>
</evidence>
<evidence type="ECO:0000269" key="18">
    <source ref="8"/>
</evidence>
<evidence type="ECO:0000303" key="19">
    <source>
    </source>
</evidence>
<evidence type="ECO:0000305" key="20"/>
<evidence type="ECO:0000305" key="21">
    <source>
    </source>
</evidence>
<evidence type="ECO:0000312" key="22">
    <source>
        <dbReference type="HGNC" id="HGNC:10298"/>
    </source>
</evidence>
<evidence type="ECO:0007744" key="23">
    <source>
    </source>
</evidence>
<evidence type="ECO:0007829" key="24">
    <source>
        <dbReference type="PDB" id="2PA2"/>
    </source>
</evidence>
<accession>P27635</accession>
<accession>A3KQT0</accession>
<accession>D3DWW6</accession>
<accession>Q16470</accession>
<accession>Q2HXT7</accession>
<accession>Q53FH7</accession>
<accession>Q6FGN8</accession>
<accession>Q8TDA5</accession>
<sequence length="214" mass="24577">MGRRPARCYRYCKNKPYPKSRFCRGVPDAKIRIFDLGRKKAKVDEFPLCGHMVSDEYEQLSSEALEAARICANKYMVKSCGKDGFHIRVRLHPFHVIRINKMLSCAGADRLQTGMRGAFGKPQGTVARVHIGQVIMSIRTKLQNKEHVIEALRRAKFKFPGRQKIHISKKWGFTKFNADEFEDMVAEKRLIPDGCGVKYIPSRGPLDKWRALHS</sequence>
<gene>
    <name evidence="22" type="primary">RPL10</name>
    <name type="synonym">DXS648E</name>
    <name type="synonym">QM</name>
</gene>